<protein>
    <recommendedName>
        <fullName>Prepro-urotensin II-gamma</fullName>
    </recommendedName>
    <component>
        <recommendedName>
            <fullName>Urophysin gamma</fullName>
        </recommendedName>
    </component>
    <component>
        <recommendedName>
            <fullName>Urotensin II-gamma</fullName>
            <shortName>U-II-gamma</shortName>
            <shortName>UII-gamma</shortName>
        </recommendedName>
    </component>
</protein>
<reference key="1">
    <citation type="journal article" date="1986" name="J. Neurosci.">
        <title>Cloning and sequence analysis of cDNAs encoding precursors of urotensin II-alpha and -gamma.</title>
        <authorList>
            <person name="Ohsako S."/>
            <person name="Ishida I."/>
            <person name="Ichikawa T."/>
            <person name="Deguchi T."/>
        </authorList>
    </citation>
    <scope>NUCLEOTIDE SEQUENCE [MRNA]</scope>
</reference>
<reference key="2">
    <citation type="book" date="1981" name="Proceedings of the 7th American peptide symposium">
        <editorList>
            <person name="Rich D.H."/>
            <person name="Gross E."/>
        </editorList>
        <authorList>
            <person name="Munekata E."/>
            <person name="Ohtaki T."/>
            <person name="Ichikawa T."/>
            <person name="McMaster D."/>
            <person name="Lederis K."/>
        </authorList>
    </citation>
    <scope>PROTEIN SEQUENCE OF 114-125</scope>
</reference>
<evidence type="ECO:0000255" key="1"/>
<evidence type="ECO:0000305" key="2"/>
<dbReference type="EMBL" id="M14088">
    <property type="protein sequence ID" value="AAA49216.1"/>
    <property type="molecule type" value="mRNA"/>
</dbReference>
<dbReference type="PIR" id="I50499">
    <property type="entry name" value="I50499"/>
</dbReference>
<dbReference type="Proteomes" id="UP000694384">
    <property type="component" value="Unplaced"/>
</dbReference>
<dbReference type="Proteomes" id="UP000694427">
    <property type="component" value="Unplaced"/>
</dbReference>
<dbReference type="Proteomes" id="UP000694700">
    <property type="component" value="Unplaced"/>
</dbReference>
<dbReference type="Proteomes" id="UP000694701">
    <property type="component" value="Unplaced"/>
</dbReference>
<dbReference type="Proteomes" id="UP001155660">
    <property type="component" value="Unplaced"/>
</dbReference>
<dbReference type="GO" id="GO:0005576">
    <property type="term" value="C:extracellular region"/>
    <property type="evidence" value="ECO:0007669"/>
    <property type="project" value="UniProtKB-SubCell"/>
</dbReference>
<dbReference type="GO" id="GO:0005179">
    <property type="term" value="F:hormone activity"/>
    <property type="evidence" value="ECO:0007669"/>
    <property type="project" value="UniProtKB-KW"/>
</dbReference>
<dbReference type="GO" id="GO:0097746">
    <property type="term" value="P:blood vessel diameter maintenance"/>
    <property type="evidence" value="ECO:0007669"/>
    <property type="project" value="InterPro"/>
</dbReference>
<dbReference type="GO" id="GO:0008217">
    <property type="term" value="P:regulation of blood pressure"/>
    <property type="evidence" value="ECO:0007669"/>
    <property type="project" value="InterPro"/>
</dbReference>
<dbReference type="InterPro" id="IPR001483">
    <property type="entry name" value="Urotensin_II"/>
</dbReference>
<dbReference type="PANTHER" id="PTHR14447">
    <property type="entry name" value="UROTENSIN 2"/>
    <property type="match status" value="1"/>
</dbReference>
<dbReference type="PANTHER" id="PTHR14447:SF0">
    <property type="entry name" value="UROTENSIN-2"/>
    <property type="match status" value="1"/>
</dbReference>
<dbReference type="Pfam" id="PF02083">
    <property type="entry name" value="Urotensin_II"/>
    <property type="match status" value="1"/>
</dbReference>
<dbReference type="PROSITE" id="PS00984">
    <property type="entry name" value="UROTENSIN_II"/>
    <property type="match status" value="1"/>
</dbReference>
<accession>P06580</accession>
<feature type="signal peptide">
    <location>
        <begin position="1"/>
        <end position="21"/>
    </location>
</feature>
<feature type="chain" id="PRO_0000036338" description="Urophysin gamma" evidence="1">
    <location>
        <begin position="22"/>
        <end position="106"/>
    </location>
</feature>
<feature type="propeptide" id="PRO_0000036339" evidence="1">
    <location>
        <begin position="109"/>
        <end position="111"/>
    </location>
</feature>
<feature type="peptide" id="PRO_0000036340" description="Urotensin II-gamma">
    <location>
        <begin position="114"/>
        <end position="125"/>
    </location>
</feature>
<feature type="disulfide bond">
    <location>
        <begin position="119"/>
        <end position="124"/>
    </location>
</feature>
<keyword id="KW-0165">Cleavage on pair of basic residues</keyword>
<keyword id="KW-0903">Direct protein sequencing</keyword>
<keyword id="KW-1015">Disulfide bond</keyword>
<keyword id="KW-0372">Hormone</keyword>
<keyword id="KW-1185">Reference proteome</keyword>
<keyword id="KW-0964">Secreted</keyword>
<keyword id="KW-0732">Signal</keyword>
<comment type="function">
    <text>Urotensin is found in the teleost caudal neurosecretory system. It has a suggested role in osmoregulation and as a corticotropin-releasing factor. The non-hormonal portion of this precursor may be a urotensin binding protein, urophysin.</text>
</comment>
<comment type="subcellular location">
    <subcellularLocation>
        <location>Secreted</location>
    </subcellularLocation>
</comment>
<comment type="similarity">
    <text evidence="2">Belongs to the urotensin-2 family.</text>
</comment>
<name>UTS2G_CYPCA</name>
<proteinExistence type="evidence at protein level"/>
<sequence>MMCNLLLSCSVLLLSCSHLLAHPVTDTADMTYSGPDSVEEAGGVNPDDFSVSDLNEHLQRAAVAGYSPLFSQENIKVPGQIPKEALRELLLEKPYRLIPPRGLWGSRRQFRKRGGGADCFWKYCI</sequence>
<organism>
    <name type="scientific">Cyprinus carpio</name>
    <name type="common">Common carp</name>
    <dbReference type="NCBI Taxonomy" id="7962"/>
    <lineage>
        <taxon>Eukaryota</taxon>
        <taxon>Metazoa</taxon>
        <taxon>Chordata</taxon>
        <taxon>Craniata</taxon>
        <taxon>Vertebrata</taxon>
        <taxon>Euteleostomi</taxon>
        <taxon>Actinopterygii</taxon>
        <taxon>Neopterygii</taxon>
        <taxon>Teleostei</taxon>
        <taxon>Ostariophysi</taxon>
        <taxon>Cypriniformes</taxon>
        <taxon>Cyprinidae</taxon>
        <taxon>Cyprininae</taxon>
        <taxon>Cyprinus</taxon>
    </lineage>
</organism>